<gene>
    <name evidence="1" type="primary">pyrD</name>
    <name type="ordered locus">Smal_1724</name>
</gene>
<accession>B4STK4</accession>
<proteinExistence type="inferred from homology"/>
<name>PYRD_STRM5</name>
<organism>
    <name type="scientific">Stenotrophomonas maltophilia (strain R551-3)</name>
    <dbReference type="NCBI Taxonomy" id="391008"/>
    <lineage>
        <taxon>Bacteria</taxon>
        <taxon>Pseudomonadati</taxon>
        <taxon>Pseudomonadota</taxon>
        <taxon>Gammaproteobacteria</taxon>
        <taxon>Lysobacterales</taxon>
        <taxon>Lysobacteraceae</taxon>
        <taxon>Stenotrophomonas</taxon>
        <taxon>Stenotrophomonas maltophilia group</taxon>
    </lineage>
</organism>
<evidence type="ECO:0000255" key="1">
    <source>
        <dbReference type="HAMAP-Rule" id="MF_00225"/>
    </source>
</evidence>
<comment type="function">
    <text evidence="1">Catalyzes the conversion of dihydroorotate to orotate with quinone as electron acceptor.</text>
</comment>
<comment type="catalytic activity">
    <reaction evidence="1">
        <text>(S)-dihydroorotate + a quinone = orotate + a quinol</text>
        <dbReference type="Rhea" id="RHEA:30187"/>
        <dbReference type="ChEBI" id="CHEBI:24646"/>
        <dbReference type="ChEBI" id="CHEBI:30839"/>
        <dbReference type="ChEBI" id="CHEBI:30864"/>
        <dbReference type="ChEBI" id="CHEBI:132124"/>
        <dbReference type="EC" id="1.3.5.2"/>
    </reaction>
</comment>
<comment type="cofactor">
    <cofactor evidence="1">
        <name>FMN</name>
        <dbReference type="ChEBI" id="CHEBI:58210"/>
    </cofactor>
    <text evidence="1">Binds 1 FMN per subunit.</text>
</comment>
<comment type="pathway">
    <text evidence="1">Pyrimidine metabolism; UMP biosynthesis via de novo pathway; orotate from (S)-dihydroorotate (quinone route): step 1/1.</text>
</comment>
<comment type="subunit">
    <text evidence="1">Monomer.</text>
</comment>
<comment type="subcellular location">
    <subcellularLocation>
        <location evidence="1">Cell membrane</location>
        <topology evidence="1">Peripheral membrane protein</topology>
    </subcellularLocation>
</comment>
<comment type="similarity">
    <text evidence="1">Belongs to the dihydroorotate dehydrogenase family. Type 2 subfamily.</text>
</comment>
<feature type="chain" id="PRO_1000100292" description="Dihydroorotate dehydrogenase (quinone)">
    <location>
        <begin position="1"/>
        <end position="351"/>
    </location>
</feature>
<feature type="active site" description="Nucleophile" evidence="1">
    <location>
        <position position="175"/>
    </location>
</feature>
<feature type="binding site" evidence="1">
    <location>
        <begin position="61"/>
        <end position="65"/>
    </location>
    <ligand>
        <name>FMN</name>
        <dbReference type="ChEBI" id="CHEBI:58210"/>
    </ligand>
</feature>
<feature type="binding site" evidence="1">
    <location>
        <position position="65"/>
    </location>
    <ligand>
        <name>substrate</name>
    </ligand>
</feature>
<feature type="binding site" evidence="1">
    <location>
        <position position="85"/>
    </location>
    <ligand>
        <name>FMN</name>
        <dbReference type="ChEBI" id="CHEBI:58210"/>
    </ligand>
</feature>
<feature type="binding site" evidence="1">
    <location>
        <begin position="110"/>
        <end position="114"/>
    </location>
    <ligand>
        <name>substrate</name>
    </ligand>
</feature>
<feature type="binding site" evidence="1">
    <location>
        <position position="139"/>
    </location>
    <ligand>
        <name>FMN</name>
        <dbReference type="ChEBI" id="CHEBI:58210"/>
    </ligand>
</feature>
<feature type="binding site" evidence="1">
    <location>
        <position position="172"/>
    </location>
    <ligand>
        <name>FMN</name>
        <dbReference type="ChEBI" id="CHEBI:58210"/>
    </ligand>
</feature>
<feature type="binding site" evidence="1">
    <location>
        <position position="172"/>
    </location>
    <ligand>
        <name>substrate</name>
    </ligand>
</feature>
<feature type="binding site" evidence="1">
    <location>
        <position position="177"/>
    </location>
    <ligand>
        <name>substrate</name>
    </ligand>
</feature>
<feature type="binding site" evidence="1">
    <location>
        <position position="217"/>
    </location>
    <ligand>
        <name>FMN</name>
        <dbReference type="ChEBI" id="CHEBI:58210"/>
    </ligand>
</feature>
<feature type="binding site" evidence="1">
    <location>
        <position position="245"/>
    </location>
    <ligand>
        <name>FMN</name>
        <dbReference type="ChEBI" id="CHEBI:58210"/>
    </ligand>
</feature>
<feature type="binding site" evidence="1">
    <location>
        <begin position="246"/>
        <end position="247"/>
    </location>
    <ligand>
        <name>substrate</name>
    </ligand>
</feature>
<feature type="binding site" evidence="1">
    <location>
        <position position="268"/>
    </location>
    <ligand>
        <name>FMN</name>
        <dbReference type="ChEBI" id="CHEBI:58210"/>
    </ligand>
</feature>
<feature type="binding site" evidence="1">
    <location>
        <position position="297"/>
    </location>
    <ligand>
        <name>FMN</name>
        <dbReference type="ChEBI" id="CHEBI:58210"/>
    </ligand>
</feature>
<feature type="binding site" evidence="1">
    <location>
        <begin position="318"/>
        <end position="319"/>
    </location>
    <ligand>
        <name>FMN</name>
        <dbReference type="ChEBI" id="CHEBI:58210"/>
    </ligand>
</feature>
<protein>
    <recommendedName>
        <fullName evidence="1">Dihydroorotate dehydrogenase (quinone)</fullName>
        <ecNumber evidence="1">1.3.5.2</ecNumber>
    </recommendedName>
    <alternativeName>
        <fullName evidence="1">DHOdehase</fullName>
        <shortName evidence="1">DHOD</shortName>
        <shortName evidence="1">DHODase</shortName>
    </alternativeName>
    <alternativeName>
        <fullName evidence="1">Dihydroorotate oxidase</fullName>
    </alternativeName>
</protein>
<dbReference type="EC" id="1.3.5.2" evidence="1"/>
<dbReference type="EMBL" id="CP001111">
    <property type="protein sequence ID" value="ACF51428.1"/>
    <property type="molecule type" value="Genomic_DNA"/>
</dbReference>
<dbReference type="RefSeq" id="WP_012510856.1">
    <property type="nucleotide sequence ID" value="NC_011071.1"/>
</dbReference>
<dbReference type="SMR" id="B4STK4"/>
<dbReference type="STRING" id="391008.Smal_1724"/>
<dbReference type="KEGG" id="smt:Smal_1724"/>
<dbReference type="eggNOG" id="COG0167">
    <property type="taxonomic scope" value="Bacteria"/>
</dbReference>
<dbReference type="HOGENOM" id="CLU_013640_2_0_6"/>
<dbReference type="OrthoDB" id="9802377at2"/>
<dbReference type="UniPathway" id="UPA00070">
    <property type="reaction ID" value="UER00946"/>
</dbReference>
<dbReference type="Proteomes" id="UP000001867">
    <property type="component" value="Chromosome"/>
</dbReference>
<dbReference type="GO" id="GO:0005737">
    <property type="term" value="C:cytoplasm"/>
    <property type="evidence" value="ECO:0007669"/>
    <property type="project" value="InterPro"/>
</dbReference>
<dbReference type="GO" id="GO:0005886">
    <property type="term" value="C:plasma membrane"/>
    <property type="evidence" value="ECO:0007669"/>
    <property type="project" value="UniProtKB-SubCell"/>
</dbReference>
<dbReference type="GO" id="GO:0106430">
    <property type="term" value="F:dihydroorotate dehydrogenase (quinone) activity"/>
    <property type="evidence" value="ECO:0007669"/>
    <property type="project" value="UniProtKB-EC"/>
</dbReference>
<dbReference type="GO" id="GO:0006207">
    <property type="term" value="P:'de novo' pyrimidine nucleobase biosynthetic process"/>
    <property type="evidence" value="ECO:0007669"/>
    <property type="project" value="InterPro"/>
</dbReference>
<dbReference type="GO" id="GO:0044205">
    <property type="term" value="P:'de novo' UMP biosynthetic process"/>
    <property type="evidence" value="ECO:0007669"/>
    <property type="project" value="UniProtKB-UniRule"/>
</dbReference>
<dbReference type="CDD" id="cd04738">
    <property type="entry name" value="DHOD_2_like"/>
    <property type="match status" value="1"/>
</dbReference>
<dbReference type="FunFam" id="3.20.20.70:FF:000028">
    <property type="entry name" value="Dihydroorotate dehydrogenase (quinone)"/>
    <property type="match status" value="1"/>
</dbReference>
<dbReference type="Gene3D" id="3.20.20.70">
    <property type="entry name" value="Aldolase class I"/>
    <property type="match status" value="1"/>
</dbReference>
<dbReference type="HAMAP" id="MF_00225">
    <property type="entry name" value="DHO_dh_type2"/>
    <property type="match status" value="1"/>
</dbReference>
<dbReference type="InterPro" id="IPR013785">
    <property type="entry name" value="Aldolase_TIM"/>
</dbReference>
<dbReference type="InterPro" id="IPR050074">
    <property type="entry name" value="DHO_dehydrogenase"/>
</dbReference>
<dbReference type="InterPro" id="IPR012135">
    <property type="entry name" value="Dihydroorotate_DH_1_2"/>
</dbReference>
<dbReference type="InterPro" id="IPR005719">
    <property type="entry name" value="Dihydroorotate_DH_2"/>
</dbReference>
<dbReference type="InterPro" id="IPR005720">
    <property type="entry name" value="Dihydroorotate_DH_cat"/>
</dbReference>
<dbReference type="InterPro" id="IPR001295">
    <property type="entry name" value="Dihydroorotate_DH_CS"/>
</dbReference>
<dbReference type="NCBIfam" id="NF003644">
    <property type="entry name" value="PRK05286.1-1"/>
    <property type="match status" value="1"/>
</dbReference>
<dbReference type="NCBIfam" id="NF003645">
    <property type="entry name" value="PRK05286.1-2"/>
    <property type="match status" value="1"/>
</dbReference>
<dbReference type="NCBIfam" id="NF003646">
    <property type="entry name" value="PRK05286.1-4"/>
    <property type="match status" value="1"/>
</dbReference>
<dbReference type="NCBIfam" id="NF003652">
    <property type="entry name" value="PRK05286.2-5"/>
    <property type="match status" value="1"/>
</dbReference>
<dbReference type="NCBIfam" id="TIGR01036">
    <property type="entry name" value="pyrD_sub2"/>
    <property type="match status" value="1"/>
</dbReference>
<dbReference type="PANTHER" id="PTHR48109:SF4">
    <property type="entry name" value="DIHYDROOROTATE DEHYDROGENASE (QUINONE), MITOCHONDRIAL"/>
    <property type="match status" value="1"/>
</dbReference>
<dbReference type="PANTHER" id="PTHR48109">
    <property type="entry name" value="DIHYDROOROTATE DEHYDROGENASE (QUINONE), MITOCHONDRIAL-RELATED"/>
    <property type="match status" value="1"/>
</dbReference>
<dbReference type="Pfam" id="PF01180">
    <property type="entry name" value="DHO_dh"/>
    <property type="match status" value="1"/>
</dbReference>
<dbReference type="PIRSF" id="PIRSF000164">
    <property type="entry name" value="DHO_oxidase"/>
    <property type="match status" value="1"/>
</dbReference>
<dbReference type="SUPFAM" id="SSF51395">
    <property type="entry name" value="FMN-linked oxidoreductases"/>
    <property type="match status" value="1"/>
</dbReference>
<dbReference type="PROSITE" id="PS00911">
    <property type="entry name" value="DHODEHASE_1"/>
    <property type="match status" value="1"/>
</dbReference>
<dbReference type="PROSITE" id="PS00912">
    <property type="entry name" value="DHODEHASE_2"/>
    <property type="match status" value="1"/>
</dbReference>
<sequence length="351" mass="37473">MYSLARPFLFSLDAERAHGLGLSALDLAYRTGTTPLLAARIAPMPSTVFGLTFPNPVGLAAGLDKNGEHIDALFALGFGFVEIGTITPRPQAGNPQPRLFRLPAHNAIINRMGFNNAGVDALVRNVERARNRRGMLGINIGKNKDTPNEQAADDYIACLDKVYPLADYITVNISSPNTAGLRELQEETSLRQLVSQLRERQESLAARYGRRVPMLVKVAPDLSERDIDAAARVLGELQVDGVIATNTTIDHSKVAGDPLANEAGGLSGAPVLEQSTLVLRRLRARLPESMPLIGVGGILSGADAVAKMAAGAALVQCYSGLIFRGPSLVSECVEAIRRRREAPSRGAVAPL</sequence>
<keyword id="KW-1003">Cell membrane</keyword>
<keyword id="KW-0285">Flavoprotein</keyword>
<keyword id="KW-0288">FMN</keyword>
<keyword id="KW-0472">Membrane</keyword>
<keyword id="KW-0560">Oxidoreductase</keyword>
<keyword id="KW-0665">Pyrimidine biosynthesis</keyword>
<reference key="1">
    <citation type="submission" date="2008-06" db="EMBL/GenBank/DDBJ databases">
        <title>Complete sequence of Stenotrophomonas maltophilia R551-3.</title>
        <authorList>
            <consortium name="US DOE Joint Genome Institute"/>
            <person name="Lucas S."/>
            <person name="Copeland A."/>
            <person name="Lapidus A."/>
            <person name="Glavina del Rio T."/>
            <person name="Dalin E."/>
            <person name="Tice H."/>
            <person name="Pitluck S."/>
            <person name="Chain P."/>
            <person name="Malfatti S."/>
            <person name="Shin M."/>
            <person name="Vergez L."/>
            <person name="Lang D."/>
            <person name="Schmutz J."/>
            <person name="Larimer F."/>
            <person name="Land M."/>
            <person name="Hauser L."/>
            <person name="Kyrpides N."/>
            <person name="Mikhailova N."/>
            <person name="Taghavi S."/>
            <person name="Monchy S."/>
            <person name="Newman L."/>
            <person name="Vangronsveld J."/>
            <person name="van der Lelie D."/>
            <person name="Richardson P."/>
        </authorList>
    </citation>
    <scope>NUCLEOTIDE SEQUENCE [LARGE SCALE GENOMIC DNA]</scope>
    <source>
        <strain>R551-3</strain>
    </source>
</reference>